<sequence length="402" mass="42649">MSKLSLSSLDKTHLEGKKVLVRVDFNVPLNEDGQITDDTRIRAAIPTIEYLINHSAKVILAAHFGRPKGQVNEKMRLTPVAARLSELLGQNVALTNSCIGDEAVAQSNSLSNGDVLLLENVRFFGEEEKNDLEFAEKLASHADMYVNDAFGAAHRAHASTQGVTNYLSPSVAGFLLEKELKYLQGAVDSPNRPLAAIVGGSKVSSKIGVLDSLLDKCDKIMIGGGMIFTFYKARGLDVGKSLVEEDKLELAKDLEAKAKAKGVELLLPTDVVLADEFSPDANSKISQIDAISGNWMGLDIGPDSIKVFQNALAECKTIIWNGPMGVFEFDKFADGTNAIATTLADLSAFSEVCTIIGGGDSVAAVEKAGLAEKMSHISTGGGASLELLEGKTLPGVAALNDA</sequence>
<accession>A2BNZ0</accession>
<reference key="1">
    <citation type="journal article" date="2007" name="PLoS Genet.">
        <title>Patterns and implications of gene gain and loss in the evolution of Prochlorococcus.</title>
        <authorList>
            <person name="Kettler G.C."/>
            <person name="Martiny A.C."/>
            <person name="Huang K."/>
            <person name="Zucker J."/>
            <person name="Coleman M.L."/>
            <person name="Rodrigue S."/>
            <person name="Chen F."/>
            <person name="Lapidus A."/>
            <person name="Ferriera S."/>
            <person name="Johnson J."/>
            <person name="Steglich C."/>
            <person name="Church G.M."/>
            <person name="Richardson P."/>
            <person name="Chisholm S.W."/>
        </authorList>
    </citation>
    <scope>NUCLEOTIDE SEQUENCE [LARGE SCALE GENOMIC DNA]</scope>
    <source>
        <strain>AS9601</strain>
    </source>
</reference>
<proteinExistence type="inferred from homology"/>
<protein>
    <recommendedName>
        <fullName evidence="1">Phosphoglycerate kinase</fullName>
        <ecNumber evidence="1">2.7.2.3</ecNumber>
    </recommendedName>
</protein>
<keyword id="KW-0067">ATP-binding</keyword>
<keyword id="KW-0963">Cytoplasm</keyword>
<keyword id="KW-0324">Glycolysis</keyword>
<keyword id="KW-0418">Kinase</keyword>
<keyword id="KW-0547">Nucleotide-binding</keyword>
<keyword id="KW-0808">Transferase</keyword>
<name>PGK_PROMS</name>
<dbReference type="EC" id="2.7.2.3" evidence="1"/>
<dbReference type="EMBL" id="CP000551">
    <property type="protein sequence ID" value="ABM69501.1"/>
    <property type="molecule type" value="Genomic_DNA"/>
</dbReference>
<dbReference type="RefSeq" id="WP_011817688.1">
    <property type="nucleotide sequence ID" value="NC_008816.1"/>
</dbReference>
<dbReference type="SMR" id="A2BNZ0"/>
<dbReference type="STRING" id="146891.A9601_02131"/>
<dbReference type="KEGG" id="pmb:A9601_02131"/>
<dbReference type="eggNOG" id="COG0126">
    <property type="taxonomic scope" value="Bacteria"/>
</dbReference>
<dbReference type="HOGENOM" id="CLU_025427_0_2_3"/>
<dbReference type="OrthoDB" id="9808460at2"/>
<dbReference type="UniPathway" id="UPA00109">
    <property type="reaction ID" value="UER00185"/>
</dbReference>
<dbReference type="Proteomes" id="UP000002590">
    <property type="component" value="Chromosome"/>
</dbReference>
<dbReference type="GO" id="GO:0005829">
    <property type="term" value="C:cytosol"/>
    <property type="evidence" value="ECO:0007669"/>
    <property type="project" value="TreeGrafter"/>
</dbReference>
<dbReference type="GO" id="GO:0043531">
    <property type="term" value="F:ADP binding"/>
    <property type="evidence" value="ECO:0007669"/>
    <property type="project" value="TreeGrafter"/>
</dbReference>
<dbReference type="GO" id="GO:0005524">
    <property type="term" value="F:ATP binding"/>
    <property type="evidence" value="ECO:0007669"/>
    <property type="project" value="UniProtKB-KW"/>
</dbReference>
<dbReference type="GO" id="GO:0004618">
    <property type="term" value="F:phosphoglycerate kinase activity"/>
    <property type="evidence" value="ECO:0007669"/>
    <property type="project" value="UniProtKB-UniRule"/>
</dbReference>
<dbReference type="GO" id="GO:0006094">
    <property type="term" value="P:gluconeogenesis"/>
    <property type="evidence" value="ECO:0007669"/>
    <property type="project" value="TreeGrafter"/>
</dbReference>
<dbReference type="GO" id="GO:0006096">
    <property type="term" value="P:glycolytic process"/>
    <property type="evidence" value="ECO:0007669"/>
    <property type="project" value="UniProtKB-UniRule"/>
</dbReference>
<dbReference type="CDD" id="cd00318">
    <property type="entry name" value="Phosphoglycerate_kinase"/>
    <property type="match status" value="1"/>
</dbReference>
<dbReference type="FunFam" id="3.40.50.1260:FF:000003">
    <property type="entry name" value="Phosphoglycerate kinase"/>
    <property type="match status" value="1"/>
</dbReference>
<dbReference type="FunFam" id="3.40.50.1260:FF:000006">
    <property type="entry name" value="Phosphoglycerate kinase"/>
    <property type="match status" value="1"/>
</dbReference>
<dbReference type="Gene3D" id="3.40.50.1260">
    <property type="entry name" value="Phosphoglycerate kinase, N-terminal domain"/>
    <property type="match status" value="2"/>
</dbReference>
<dbReference type="HAMAP" id="MF_00145">
    <property type="entry name" value="Phosphoglyc_kinase"/>
    <property type="match status" value="1"/>
</dbReference>
<dbReference type="InterPro" id="IPR001576">
    <property type="entry name" value="Phosphoglycerate_kinase"/>
</dbReference>
<dbReference type="InterPro" id="IPR015911">
    <property type="entry name" value="Phosphoglycerate_kinase_CS"/>
</dbReference>
<dbReference type="InterPro" id="IPR015824">
    <property type="entry name" value="Phosphoglycerate_kinase_N"/>
</dbReference>
<dbReference type="InterPro" id="IPR036043">
    <property type="entry name" value="Phosphoglycerate_kinase_sf"/>
</dbReference>
<dbReference type="PANTHER" id="PTHR11406">
    <property type="entry name" value="PHOSPHOGLYCERATE KINASE"/>
    <property type="match status" value="1"/>
</dbReference>
<dbReference type="PANTHER" id="PTHR11406:SF23">
    <property type="entry name" value="PHOSPHOGLYCERATE KINASE 1, CHLOROPLASTIC-RELATED"/>
    <property type="match status" value="1"/>
</dbReference>
<dbReference type="Pfam" id="PF00162">
    <property type="entry name" value="PGK"/>
    <property type="match status" value="1"/>
</dbReference>
<dbReference type="PIRSF" id="PIRSF000724">
    <property type="entry name" value="Pgk"/>
    <property type="match status" value="1"/>
</dbReference>
<dbReference type="PRINTS" id="PR00477">
    <property type="entry name" value="PHGLYCKINASE"/>
</dbReference>
<dbReference type="SUPFAM" id="SSF53748">
    <property type="entry name" value="Phosphoglycerate kinase"/>
    <property type="match status" value="1"/>
</dbReference>
<dbReference type="PROSITE" id="PS00111">
    <property type="entry name" value="PGLYCERATE_KINASE"/>
    <property type="match status" value="1"/>
</dbReference>
<evidence type="ECO:0000255" key="1">
    <source>
        <dbReference type="HAMAP-Rule" id="MF_00145"/>
    </source>
</evidence>
<gene>
    <name evidence="1" type="primary">pgk</name>
    <name type="ordered locus">A9601_02131</name>
</gene>
<comment type="catalytic activity">
    <reaction evidence="1">
        <text>(2R)-3-phosphoglycerate + ATP = (2R)-3-phospho-glyceroyl phosphate + ADP</text>
        <dbReference type="Rhea" id="RHEA:14801"/>
        <dbReference type="ChEBI" id="CHEBI:30616"/>
        <dbReference type="ChEBI" id="CHEBI:57604"/>
        <dbReference type="ChEBI" id="CHEBI:58272"/>
        <dbReference type="ChEBI" id="CHEBI:456216"/>
        <dbReference type="EC" id="2.7.2.3"/>
    </reaction>
</comment>
<comment type="pathway">
    <text evidence="1">Carbohydrate degradation; glycolysis; pyruvate from D-glyceraldehyde 3-phosphate: step 2/5.</text>
</comment>
<comment type="subunit">
    <text evidence="1">Monomer.</text>
</comment>
<comment type="subcellular location">
    <subcellularLocation>
        <location evidence="1">Cytoplasm</location>
    </subcellularLocation>
</comment>
<comment type="similarity">
    <text evidence="1">Belongs to the phosphoglycerate kinase family.</text>
</comment>
<feature type="chain" id="PRO_1000058031" description="Phosphoglycerate kinase">
    <location>
        <begin position="1"/>
        <end position="402"/>
    </location>
</feature>
<feature type="binding site" evidence="1">
    <location>
        <begin position="24"/>
        <end position="26"/>
    </location>
    <ligand>
        <name>substrate</name>
    </ligand>
</feature>
<feature type="binding site" evidence="1">
    <location>
        <position position="40"/>
    </location>
    <ligand>
        <name>substrate</name>
    </ligand>
</feature>
<feature type="binding site" evidence="1">
    <location>
        <begin position="63"/>
        <end position="66"/>
    </location>
    <ligand>
        <name>substrate</name>
    </ligand>
</feature>
<feature type="binding site" evidence="1">
    <location>
        <position position="122"/>
    </location>
    <ligand>
        <name>substrate</name>
    </ligand>
</feature>
<feature type="binding site" evidence="1">
    <location>
        <position position="155"/>
    </location>
    <ligand>
        <name>substrate</name>
    </ligand>
</feature>
<feature type="binding site" evidence="1">
    <location>
        <position position="206"/>
    </location>
    <ligand>
        <name>ATP</name>
        <dbReference type="ChEBI" id="CHEBI:30616"/>
    </ligand>
</feature>
<feature type="binding site" evidence="1">
    <location>
        <position position="297"/>
    </location>
    <ligand>
        <name>ATP</name>
        <dbReference type="ChEBI" id="CHEBI:30616"/>
    </ligand>
</feature>
<feature type="binding site" evidence="1">
    <location>
        <position position="328"/>
    </location>
    <ligand>
        <name>ATP</name>
        <dbReference type="ChEBI" id="CHEBI:30616"/>
    </ligand>
</feature>
<feature type="binding site" evidence="1">
    <location>
        <begin position="358"/>
        <end position="361"/>
    </location>
    <ligand>
        <name>ATP</name>
        <dbReference type="ChEBI" id="CHEBI:30616"/>
    </ligand>
</feature>
<organism>
    <name type="scientific">Prochlorococcus marinus (strain AS9601)</name>
    <dbReference type="NCBI Taxonomy" id="146891"/>
    <lineage>
        <taxon>Bacteria</taxon>
        <taxon>Bacillati</taxon>
        <taxon>Cyanobacteriota</taxon>
        <taxon>Cyanophyceae</taxon>
        <taxon>Synechococcales</taxon>
        <taxon>Prochlorococcaceae</taxon>
        <taxon>Prochlorococcus</taxon>
    </lineage>
</organism>